<gene>
    <name type="primary">yopP</name>
    <name type="ordered locus">BSU20810</name>
</gene>
<sequence length="358" mass="41596">MQNKIKQLKNYAVYDDIEGFLINKDIRSSSGNSNYMMPSSTRRVSNTRKNYEGDIKQFFSVIKGKDVKSLVPDDLVVSKSELSNYVKYLQEKGLVNNSINRKMTSLKMLYTYLEHDYKDYIDLSVFNTVERLKTVTKNWDKTTQTEAERIAQDMYINERQKPLMKKLFVKFAIRTSFRVSAILRVRWKDIQLDESTGHYIVTVIDKGSQVVSTGINQVFYEELLQLKEEDDSETELVFQGLSEQSLRHSLKRSKKRLGIPPERELVLHSFKGVGIDYVYENSGHDLLAAKEQGNHKNTLTTERYMSRKINIANSAGVTMDEKIDLNPLYEATQEDFISFFENADLVTLKKFIKHVNER</sequence>
<name>YOPP_BACSU</name>
<proteinExistence type="inferred from homology"/>
<feature type="chain" id="PRO_0000384390" description="SPbeta prophage-derived probable integrase/recombinase YopP">
    <location>
        <begin position="1"/>
        <end position="358"/>
    </location>
</feature>
<feature type="domain" description="Core-binding (CB)" evidence="2">
    <location>
        <begin position="23"/>
        <end position="114"/>
    </location>
</feature>
<feature type="domain" description="Tyr recombinase" evidence="1">
    <location>
        <begin position="137"/>
        <end position="319"/>
    </location>
</feature>
<feature type="active site" evidence="1">
    <location>
        <position position="178"/>
    </location>
</feature>
<feature type="active site" evidence="1">
    <location>
        <position position="206"/>
    </location>
</feature>
<feature type="active site" evidence="1">
    <location>
        <position position="268"/>
    </location>
</feature>
<feature type="active site" evidence="1">
    <location>
        <position position="295"/>
    </location>
</feature>
<feature type="active site" description="O-(3'-phospho-DNA)-tyrosine intermediate" evidence="1">
    <location>
        <position position="304"/>
    </location>
</feature>
<dbReference type="EMBL" id="AL009126">
    <property type="protein sequence ID" value="CAB13973.1"/>
    <property type="molecule type" value="Genomic_DNA"/>
</dbReference>
<dbReference type="RefSeq" id="NP_389963.1">
    <property type="nucleotide sequence ID" value="NC_000964.3"/>
</dbReference>
<dbReference type="RefSeq" id="WP_004399272.1">
    <property type="nucleotide sequence ID" value="NZ_OZ025638.1"/>
</dbReference>
<dbReference type="SMR" id="O34336"/>
<dbReference type="FunCoup" id="O34336">
    <property type="interactions" value="4"/>
</dbReference>
<dbReference type="STRING" id="224308.BSU20810"/>
<dbReference type="PaxDb" id="224308-BSU20810"/>
<dbReference type="EnsemblBacteria" id="CAB13973">
    <property type="protein sequence ID" value="CAB13973"/>
    <property type="gene ID" value="BSU_20810"/>
</dbReference>
<dbReference type="GeneID" id="936482"/>
<dbReference type="KEGG" id="bsu:BSU20810"/>
<dbReference type="PATRIC" id="fig|224308.179.peg.2271"/>
<dbReference type="eggNOG" id="COG0582">
    <property type="taxonomic scope" value="Bacteria"/>
</dbReference>
<dbReference type="InParanoid" id="O34336"/>
<dbReference type="OrthoDB" id="2399485at2"/>
<dbReference type="BioCyc" id="BSUB:BSU20810-MONOMER"/>
<dbReference type="Proteomes" id="UP000001570">
    <property type="component" value="Chromosome"/>
</dbReference>
<dbReference type="GO" id="GO:0003677">
    <property type="term" value="F:DNA binding"/>
    <property type="evidence" value="ECO:0007669"/>
    <property type="project" value="UniProtKB-KW"/>
</dbReference>
<dbReference type="GO" id="GO:0009009">
    <property type="term" value="F:site-specific recombinase activity"/>
    <property type="evidence" value="ECO:0000318"/>
    <property type="project" value="GO_Central"/>
</dbReference>
<dbReference type="GO" id="GO:0051301">
    <property type="term" value="P:cell division"/>
    <property type="evidence" value="ECO:0007669"/>
    <property type="project" value="UniProtKB-KW"/>
</dbReference>
<dbReference type="GO" id="GO:0007059">
    <property type="term" value="P:chromosome segregation"/>
    <property type="evidence" value="ECO:0000318"/>
    <property type="project" value="GO_Central"/>
</dbReference>
<dbReference type="GO" id="GO:0006310">
    <property type="term" value="P:DNA recombination"/>
    <property type="evidence" value="ECO:0000318"/>
    <property type="project" value="GO_Central"/>
</dbReference>
<dbReference type="GO" id="GO:0075713">
    <property type="term" value="P:establishment of integrated proviral latency"/>
    <property type="evidence" value="ECO:0007669"/>
    <property type="project" value="UniProtKB-KW"/>
</dbReference>
<dbReference type="GO" id="GO:0046718">
    <property type="term" value="P:symbiont entry into host cell"/>
    <property type="evidence" value="ECO:0007669"/>
    <property type="project" value="UniProtKB-KW"/>
</dbReference>
<dbReference type="GO" id="GO:0044826">
    <property type="term" value="P:viral genome integration into host DNA"/>
    <property type="evidence" value="ECO:0007669"/>
    <property type="project" value="UniProtKB-KW"/>
</dbReference>
<dbReference type="CDD" id="cd00397">
    <property type="entry name" value="DNA_BRE_C"/>
    <property type="match status" value="1"/>
</dbReference>
<dbReference type="Gene3D" id="1.10.150.130">
    <property type="match status" value="1"/>
</dbReference>
<dbReference type="Gene3D" id="1.10.443.10">
    <property type="entry name" value="Intergrase catalytic core"/>
    <property type="match status" value="1"/>
</dbReference>
<dbReference type="InterPro" id="IPR044068">
    <property type="entry name" value="CB"/>
</dbReference>
<dbReference type="InterPro" id="IPR011010">
    <property type="entry name" value="DNA_brk_join_enz"/>
</dbReference>
<dbReference type="InterPro" id="IPR013762">
    <property type="entry name" value="Integrase-like_cat_sf"/>
</dbReference>
<dbReference type="InterPro" id="IPR002104">
    <property type="entry name" value="Integrase_catalytic"/>
</dbReference>
<dbReference type="InterPro" id="IPR010998">
    <property type="entry name" value="Integrase_recombinase_N"/>
</dbReference>
<dbReference type="InterPro" id="IPR004107">
    <property type="entry name" value="Integrase_SAM-like_N"/>
</dbReference>
<dbReference type="InterPro" id="IPR050090">
    <property type="entry name" value="Tyrosine_recombinase_XerCD"/>
</dbReference>
<dbReference type="PANTHER" id="PTHR30349">
    <property type="entry name" value="PHAGE INTEGRASE-RELATED"/>
    <property type="match status" value="1"/>
</dbReference>
<dbReference type="PANTHER" id="PTHR30349:SF64">
    <property type="entry name" value="PROPHAGE INTEGRASE INTD-RELATED"/>
    <property type="match status" value="1"/>
</dbReference>
<dbReference type="Pfam" id="PF02899">
    <property type="entry name" value="Phage_int_SAM_1"/>
    <property type="match status" value="1"/>
</dbReference>
<dbReference type="Pfam" id="PF00589">
    <property type="entry name" value="Phage_integrase"/>
    <property type="match status" value="1"/>
</dbReference>
<dbReference type="SUPFAM" id="SSF56349">
    <property type="entry name" value="DNA breaking-rejoining enzymes"/>
    <property type="match status" value="1"/>
</dbReference>
<dbReference type="PROSITE" id="PS51900">
    <property type="entry name" value="CB"/>
    <property type="match status" value="1"/>
</dbReference>
<dbReference type="PROSITE" id="PS51898">
    <property type="entry name" value="TYR_RECOMBINASE"/>
    <property type="match status" value="1"/>
</dbReference>
<keyword id="KW-0131">Cell cycle</keyword>
<keyword id="KW-0132">Cell division</keyword>
<keyword id="KW-0159">Chromosome partition</keyword>
<keyword id="KW-0229">DNA integration</keyword>
<keyword id="KW-0233">DNA recombination</keyword>
<keyword id="KW-0238">DNA-binding</keyword>
<keyword id="KW-1185">Reference proteome</keyword>
<keyword id="KW-1179">Viral genome integration</keyword>
<keyword id="KW-1160">Virus entry into host cell</keyword>
<comment type="function">
    <text evidence="3">Probable recombinase that does not seem to have a role in chromosome dimer resolution per se but rather may have some facilitative role during chromosome partitioning in general.</text>
</comment>
<comment type="disruption phenotype">
    <text evidence="3">Little effect on the percentage of cells with partition defects and no change in sporulation frequency. However, yopP disruption strongly increases the extent of the partitioning defects seen in codV mutant strains (by about two-fold) and, to a lesser extent, those seen in ripX and dif mutant strains.</text>
</comment>
<comment type="similarity">
    <text evidence="4">Belongs to the 'phage' integrase family.</text>
</comment>
<accession>O34336</accession>
<organism>
    <name type="scientific">Bacillus subtilis (strain 168)</name>
    <dbReference type="NCBI Taxonomy" id="224308"/>
    <lineage>
        <taxon>Bacteria</taxon>
        <taxon>Bacillati</taxon>
        <taxon>Bacillota</taxon>
        <taxon>Bacilli</taxon>
        <taxon>Bacillales</taxon>
        <taxon>Bacillaceae</taxon>
        <taxon>Bacillus</taxon>
    </lineage>
</organism>
<evidence type="ECO:0000255" key="1">
    <source>
        <dbReference type="PROSITE-ProRule" id="PRU01246"/>
    </source>
</evidence>
<evidence type="ECO:0000255" key="2">
    <source>
        <dbReference type="PROSITE-ProRule" id="PRU01248"/>
    </source>
</evidence>
<evidence type="ECO:0000269" key="3">
    <source>
    </source>
</evidence>
<evidence type="ECO:0000305" key="4"/>
<reference key="1">
    <citation type="journal article" date="1997" name="Nature">
        <title>The complete genome sequence of the Gram-positive bacterium Bacillus subtilis.</title>
        <authorList>
            <person name="Kunst F."/>
            <person name="Ogasawara N."/>
            <person name="Moszer I."/>
            <person name="Albertini A.M."/>
            <person name="Alloni G."/>
            <person name="Azevedo V."/>
            <person name="Bertero M.G."/>
            <person name="Bessieres P."/>
            <person name="Bolotin A."/>
            <person name="Borchert S."/>
            <person name="Borriss R."/>
            <person name="Boursier L."/>
            <person name="Brans A."/>
            <person name="Braun M."/>
            <person name="Brignell S.C."/>
            <person name="Bron S."/>
            <person name="Brouillet S."/>
            <person name="Bruschi C.V."/>
            <person name="Caldwell B."/>
            <person name="Capuano V."/>
            <person name="Carter N.M."/>
            <person name="Choi S.-K."/>
            <person name="Codani J.-J."/>
            <person name="Connerton I.F."/>
            <person name="Cummings N.J."/>
            <person name="Daniel R.A."/>
            <person name="Denizot F."/>
            <person name="Devine K.M."/>
            <person name="Duesterhoeft A."/>
            <person name="Ehrlich S.D."/>
            <person name="Emmerson P.T."/>
            <person name="Entian K.-D."/>
            <person name="Errington J."/>
            <person name="Fabret C."/>
            <person name="Ferrari E."/>
            <person name="Foulger D."/>
            <person name="Fritz C."/>
            <person name="Fujita M."/>
            <person name="Fujita Y."/>
            <person name="Fuma S."/>
            <person name="Galizzi A."/>
            <person name="Galleron N."/>
            <person name="Ghim S.-Y."/>
            <person name="Glaser P."/>
            <person name="Goffeau A."/>
            <person name="Golightly E.J."/>
            <person name="Grandi G."/>
            <person name="Guiseppi G."/>
            <person name="Guy B.J."/>
            <person name="Haga K."/>
            <person name="Haiech J."/>
            <person name="Harwood C.R."/>
            <person name="Henaut A."/>
            <person name="Hilbert H."/>
            <person name="Holsappel S."/>
            <person name="Hosono S."/>
            <person name="Hullo M.-F."/>
            <person name="Itaya M."/>
            <person name="Jones L.-M."/>
            <person name="Joris B."/>
            <person name="Karamata D."/>
            <person name="Kasahara Y."/>
            <person name="Klaerr-Blanchard M."/>
            <person name="Klein C."/>
            <person name="Kobayashi Y."/>
            <person name="Koetter P."/>
            <person name="Koningstein G."/>
            <person name="Krogh S."/>
            <person name="Kumano M."/>
            <person name="Kurita K."/>
            <person name="Lapidus A."/>
            <person name="Lardinois S."/>
            <person name="Lauber J."/>
            <person name="Lazarevic V."/>
            <person name="Lee S.-M."/>
            <person name="Levine A."/>
            <person name="Liu H."/>
            <person name="Masuda S."/>
            <person name="Mauel C."/>
            <person name="Medigue C."/>
            <person name="Medina N."/>
            <person name="Mellado R.P."/>
            <person name="Mizuno M."/>
            <person name="Moestl D."/>
            <person name="Nakai S."/>
            <person name="Noback M."/>
            <person name="Noone D."/>
            <person name="O'Reilly M."/>
            <person name="Ogawa K."/>
            <person name="Ogiwara A."/>
            <person name="Oudega B."/>
            <person name="Park S.-H."/>
            <person name="Parro V."/>
            <person name="Pohl T.M."/>
            <person name="Portetelle D."/>
            <person name="Porwollik S."/>
            <person name="Prescott A.M."/>
            <person name="Presecan E."/>
            <person name="Pujic P."/>
            <person name="Purnelle B."/>
            <person name="Rapoport G."/>
            <person name="Rey M."/>
            <person name="Reynolds S."/>
            <person name="Rieger M."/>
            <person name="Rivolta C."/>
            <person name="Rocha E."/>
            <person name="Roche B."/>
            <person name="Rose M."/>
            <person name="Sadaie Y."/>
            <person name="Sato T."/>
            <person name="Scanlan E."/>
            <person name="Schleich S."/>
            <person name="Schroeter R."/>
            <person name="Scoffone F."/>
            <person name="Sekiguchi J."/>
            <person name="Sekowska A."/>
            <person name="Seror S.J."/>
            <person name="Serror P."/>
            <person name="Shin B.-S."/>
            <person name="Soldo B."/>
            <person name="Sorokin A."/>
            <person name="Tacconi E."/>
            <person name="Takagi T."/>
            <person name="Takahashi H."/>
            <person name="Takemaru K."/>
            <person name="Takeuchi M."/>
            <person name="Tamakoshi A."/>
            <person name="Tanaka T."/>
            <person name="Terpstra P."/>
            <person name="Tognoni A."/>
            <person name="Tosato V."/>
            <person name="Uchiyama S."/>
            <person name="Vandenbol M."/>
            <person name="Vannier F."/>
            <person name="Vassarotti A."/>
            <person name="Viari A."/>
            <person name="Wambutt R."/>
            <person name="Wedler E."/>
            <person name="Wedler H."/>
            <person name="Weitzenegger T."/>
            <person name="Winters P."/>
            <person name="Wipat A."/>
            <person name="Yamamoto H."/>
            <person name="Yamane K."/>
            <person name="Yasumoto K."/>
            <person name="Yata K."/>
            <person name="Yoshida K."/>
            <person name="Yoshikawa H.-F."/>
            <person name="Zumstein E."/>
            <person name="Yoshikawa H."/>
            <person name="Danchin A."/>
        </authorList>
    </citation>
    <scope>NUCLEOTIDE SEQUENCE [LARGE SCALE GENOMIC DNA]</scope>
    <source>
        <strain>168</strain>
    </source>
</reference>
<reference key="2">
    <citation type="journal article" date="2001" name="J. Bacteriol.">
        <title>Identification and characterization of the dif site from Bacillus subtilis.</title>
        <authorList>
            <person name="Sciochetti S.A."/>
            <person name="Piggot P.J."/>
            <person name="Blakely G.W."/>
        </authorList>
    </citation>
    <scope>DISRUPTION PHENOTYPE</scope>
    <scope>FUNCTION</scope>
    <source>
        <strain>168</strain>
    </source>
</reference>
<protein>
    <recommendedName>
        <fullName>SPbeta prophage-derived probable integrase/recombinase YopP</fullName>
    </recommendedName>
</protein>